<keyword id="KW-1185">Reference proteome</keyword>
<keyword id="KW-0732">Signal</keyword>
<keyword id="KW-0862">Zinc</keyword>
<dbReference type="EMBL" id="AE017285">
    <property type="protein sequence ID" value="AAS97853.1"/>
    <property type="molecule type" value="Genomic_DNA"/>
</dbReference>
<dbReference type="RefSeq" id="WP_010940639.1">
    <property type="nucleotide sequence ID" value="NC_002937.3"/>
</dbReference>
<dbReference type="RefSeq" id="YP_012593.1">
    <property type="nucleotide sequence ID" value="NC_002937.3"/>
</dbReference>
<dbReference type="SMR" id="Q725P0"/>
<dbReference type="IntAct" id="Q725P0">
    <property type="interactions" value="1"/>
</dbReference>
<dbReference type="STRING" id="882.DVU_3384"/>
<dbReference type="PaxDb" id="882-DVU_3384"/>
<dbReference type="EnsemblBacteria" id="AAS97853">
    <property type="protein sequence ID" value="AAS97853"/>
    <property type="gene ID" value="DVU_3384"/>
</dbReference>
<dbReference type="KEGG" id="dvu:DVU_3384"/>
<dbReference type="PATRIC" id="fig|882.5.peg.3070"/>
<dbReference type="eggNOG" id="COG3678">
    <property type="taxonomic scope" value="Bacteria"/>
</dbReference>
<dbReference type="HOGENOM" id="CLU_1501217_0_0_7"/>
<dbReference type="OrthoDB" id="5471872at2"/>
<dbReference type="Proteomes" id="UP000002194">
    <property type="component" value="Chromosome"/>
</dbReference>
<dbReference type="Gene3D" id="1.20.120.1490">
    <property type="match status" value="1"/>
</dbReference>
<dbReference type="InterPro" id="IPR025961">
    <property type="entry name" value="Metal_resist"/>
</dbReference>
<dbReference type="Pfam" id="PF13801">
    <property type="entry name" value="Metal_resist"/>
    <property type="match status" value="1"/>
</dbReference>
<name>ZRAP_NITV2</name>
<proteinExistence type="inferred from homology"/>
<protein>
    <recommendedName>
        <fullName>Zinc resistance-associated protein homolog</fullName>
    </recommendedName>
</protein>
<feature type="signal peptide" evidence="1">
    <location>
        <begin position="1"/>
        <end position="28"/>
    </location>
</feature>
<feature type="chain" id="PRO_0000041887" description="Zinc resistance-associated protein homolog">
    <location>
        <begin position="29"/>
        <end position="173"/>
    </location>
</feature>
<sequence length="173" mass="18508">MNSKRIALGIIALATVVSLGTAANNAFARGHGNYHGQGQMMGQAYEALTPEKQAKFDSLIDAFNTKVTPLRDKLWAKHTELNALSSNPNTKPEDIRKLTDEITALRTQYRTEAANLDASMQKEVGIKTHFATMGHRGMGGMGGGCGMMGGKGGMGSGMMQMHDGEGPHRGQNM</sequence>
<evidence type="ECO:0000255" key="1"/>
<evidence type="ECO:0000305" key="2"/>
<comment type="similarity">
    <text evidence="2">Belongs to the ZraP family.</text>
</comment>
<accession>Q725P0</accession>
<organism>
    <name type="scientific">Nitratidesulfovibrio vulgaris (strain ATCC 29579 / DSM 644 / CCUG 34227 / NCIMB 8303 / VKM B-1760 / Hildenborough)</name>
    <name type="common">Desulfovibrio vulgaris</name>
    <dbReference type="NCBI Taxonomy" id="882"/>
    <lineage>
        <taxon>Bacteria</taxon>
        <taxon>Pseudomonadati</taxon>
        <taxon>Thermodesulfobacteriota</taxon>
        <taxon>Desulfovibrionia</taxon>
        <taxon>Desulfovibrionales</taxon>
        <taxon>Desulfovibrionaceae</taxon>
        <taxon>Nitratidesulfovibrio</taxon>
    </lineage>
</organism>
<reference key="1">
    <citation type="journal article" date="2004" name="Nat. Biotechnol.">
        <title>The genome sequence of the anaerobic, sulfate-reducing bacterium Desulfovibrio vulgaris Hildenborough.</title>
        <authorList>
            <person name="Heidelberg J.F."/>
            <person name="Seshadri R."/>
            <person name="Haveman S.A."/>
            <person name="Hemme C.L."/>
            <person name="Paulsen I.T."/>
            <person name="Kolonay J.F."/>
            <person name="Eisen J.A."/>
            <person name="Ward N.L."/>
            <person name="Methe B.A."/>
            <person name="Brinkac L.M."/>
            <person name="Daugherty S.C."/>
            <person name="DeBoy R.T."/>
            <person name="Dodson R.J."/>
            <person name="Durkin A.S."/>
            <person name="Madupu R."/>
            <person name="Nelson W.C."/>
            <person name="Sullivan S.A."/>
            <person name="Fouts D.E."/>
            <person name="Haft D.H."/>
            <person name="Selengut J."/>
            <person name="Peterson J.D."/>
            <person name="Davidsen T.M."/>
            <person name="Zafar N."/>
            <person name="Zhou L."/>
            <person name="Radune D."/>
            <person name="Dimitrov G."/>
            <person name="Hance M."/>
            <person name="Tran K."/>
            <person name="Khouri H.M."/>
            <person name="Gill J."/>
            <person name="Utterback T.R."/>
            <person name="Feldblyum T.V."/>
            <person name="Wall J.D."/>
            <person name="Voordouw G."/>
            <person name="Fraser C.M."/>
        </authorList>
    </citation>
    <scope>NUCLEOTIDE SEQUENCE [LARGE SCALE GENOMIC DNA]</scope>
    <source>
        <strain>ATCC 29579 / DSM 644 / CCUG 34227 / NCIMB 8303 / VKM B-1760 / Hildenborough</strain>
    </source>
</reference>
<gene>
    <name type="ordered locus">DVU_3384</name>
</gene>